<sequence>MKPENKIPVLTRLSDEMTAVVNFQQPGLPPWPADGDIETQRQYYLLERRFWNADAPSMTTRTCAVPTPYGDVTTRLYSPQPTSQAILYYLHGGGFILGNLDTHDRIMRLLARYTGCTVIGIDYSLSPQARYPQAIEETVAVCSYFSQHADEYSLNVEKIGFAGDSAGAMLALASALWLRDKHIRCGNVIAILLWYGLYGLQDSVSRRLFGGAWDGLTREDLDMYEKAYLRNEDDRESPWYCLFNNDLTRDVPPCFIASAEFDPLIDDSRLLHQTLQAHQQPCEYKMYPGTLHAFLHYSRMMTIADDALQDGARFFMARMKTPR</sequence>
<gene>
    <name evidence="2" type="primary">aes</name>
    <name type="ordered locus">SeSA_A0552</name>
</gene>
<accession>B4TMG8</accession>
<keyword id="KW-0963">Cytoplasm</keyword>
<keyword id="KW-0378">Hydrolase</keyword>
<keyword id="KW-0719">Serine esterase</keyword>
<reference key="1">
    <citation type="journal article" date="2011" name="J. Bacteriol.">
        <title>Comparative genomics of 28 Salmonella enterica isolates: evidence for CRISPR-mediated adaptive sublineage evolution.</title>
        <authorList>
            <person name="Fricke W.F."/>
            <person name="Mammel M.K."/>
            <person name="McDermott P.F."/>
            <person name="Tartera C."/>
            <person name="White D.G."/>
            <person name="Leclerc J.E."/>
            <person name="Ravel J."/>
            <person name="Cebula T.A."/>
        </authorList>
    </citation>
    <scope>NUCLEOTIDE SEQUENCE [LARGE SCALE GENOMIC DNA]</scope>
    <source>
        <strain>CVM19633</strain>
    </source>
</reference>
<name>AES_SALSV</name>
<dbReference type="EC" id="3.1.1.-" evidence="2"/>
<dbReference type="EMBL" id="CP001127">
    <property type="protein sequence ID" value="ACF92921.1"/>
    <property type="molecule type" value="Genomic_DNA"/>
</dbReference>
<dbReference type="RefSeq" id="WP_000801785.1">
    <property type="nucleotide sequence ID" value="NC_011094.1"/>
</dbReference>
<dbReference type="SMR" id="B4TMG8"/>
<dbReference type="ESTHER" id="salty-AES">
    <property type="family name" value="Acetyl_esterase"/>
</dbReference>
<dbReference type="MEROPS" id="S09.A47"/>
<dbReference type="KEGG" id="sew:SeSA_A0552"/>
<dbReference type="HOGENOM" id="CLU_012494_6_4_6"/>
<dbReference type="Proteomes" id="UP000001865">
    <property type="component" value="Chromosome"/>
</dbReference>
<dbReference type="GO" id="GO:0005737">
    <property type="term" value="C:cytoplasm"/>
    <property type="evidence" value="ECO:0007669"/>
    <property type="project" value="UniProtKB-SubCell"/>
</dbReference>
<dbReference type="GO" id="GO:0052689">
    <property type="term" value="F:carboxylic ester hydrolase activity"/>
    <property type="evidence" value="ECO:0007669"/>
    <property type="project" value="UniProtKB-UniRule"/>
</dbReference>
<dbReference type="FunFam" id="3.40.50.1820:FF:000035">
    <property type="entry name" value="Acetyl esterase"/>
    <property type="match status" value="1"/>
</dbReference>
<dbReference type="Gene3D" id="3.40.50.1820">
    <property type="entry name" value="alpha/beta hydrolase"/>
    <property type="match status" value="1"/>
</dbReference>
<dbReference type="HAMAP" id="MF_01958">
    <property type="entry name" value="Acetyl_esterase"/>
    <property type="match status" value="1"/>
</dbReference>
<dbReference type="InterPro" id="IPR013094">
    <property type="entry name" value="AB_hydrolase_3"/>
</dbReference>
<dbReference type="InterPro" id="IPR029058">
    <property type="entry name" value="AB_hydrolase_fold"/>
</dbReference>
<dbReference type="InterPro" id="IPR023508">
    <property type="entry name" value="Acetyl_esterase"/>
</dbReference>
<dbReference type="InterPro" id="IPR050300">
    <property type="entry name" value="GDXG_lipolytic_enzyme"/>
</dbReference>
<dbReference type="InterPro" id="IPR033140">
    <property type="entry name" value="Lipase_GDXG_put_SER_AS"/>
</dbReference>
<dbReference type="NCBIfam" id="NF007547">
    <property type="entry name" value="PRK10162.1"/>
    <property type="match status" value="1"/>
</dbReference>
<dbReference type="PANTHER" id="PTHR48081">
    <property type="entry name" value="AB HYDROLASE SUPERFAMILY PROTEIN C4A8.06C"/>
    <property type="match status" value="1"/>
</dbReference>
<dbReference type="PANTHER" id="PTHR48081:SF8">
    <property type="entry name" value="ALPHA_BETA HYDROLASE FOLD-3 DOMAIN-CONTAINING PROTEIN-RELATED"/>
    <property type="match status" value="1"/>
</dbReference>
<dbReference type="Pfam" id="PF07859">
    <property type="entry name" value="Abhydrolase_3"/>
    <property type="match status" value="1"/>
</dbReference>
<dbReference type="SUPFAM" id="SSF53474">
    <property type="entry name" value="alpha/beta-Hydrolases"/>
    <property type="match status" value="1"/>
</dbReference>
<dbReference type="PROSITE" id="PS01174">
    <property type="entry name" value="LIPASE_GDXG_SER"/>
    <property type="match status" value="1"/>
</dbReference>
<comment type="function">
    <text evidence="2">Displays esterase activity towards short chain fatty esters (acyl chain length of up to 8 carbons). Able to hydrolyze triacetylglycerol (triacetin) and tributyrylglycerol (tributyrin), but not trioleylglycerol (triolein) or cholesterol oleate. Negatively regulates MalT activity by antagonizing maltotriose binding. Inhibits MelA galactosidase activity.</text>
</comment>
<comment type="subunit">
    <text evidence="2">Homodimer. Interacts with MalT and MelA.</text>
</comment>
<comment type="subcellular location">
    <subcellularLocation>
        <location evidence="2">Cytoplasm</location>
    </subcellularLocation>
</comment>
<comment type="similarity">
    <text evidence="2">Belongs to the 'GDXG' lipolytic enzyme family.</text>
</comment>
<organism>
    <name type="scientific">Salmonella schwarzengrund (strain CVM19633)</name>
    <dbReference type="NCBI Taxonomy" id="439843"/>
    <lineage>
        <taxon>Bacteria</taxon>
        <taxon>Pseudomonadati</taxon>
        <taxon>Pseudomonadota</taxon>
        <taxon>Gammaproteobacteria</taxon>
        <taxon>Enterobacterales</taxon>
        <taxon>Enterobacteriaceae</taxon>
        <taxon>Salmonella</taxon>
    </lineage>
</organism>
<proteinExistence type="inferred from homology"/>
<protein>
    <recommendedName>
        <fullName evidence="2">Acetyl esterase</fullName>
        <ecNumber evidence="2">3.1.1.-</ecNumber>
    </recommendedName>
</protein>
<evidence type="ECO:0000250" key="1">
    <source>
        <dbReference type="UniProtKB" id="Q5NUF3"/>
    </source>
</evidence>
<evidence type="ECO:0000255" key="2">
    <source>
        <dbReference type="HAMAP-Rule" id="MF_01958"/>
    </source>
</evidence>
<feature type="chain" id="PRO_1000188995" description="Acetyl esterase">
    <location>
        <begin position="1"/>
        <end position="323"/>
    </location>
</feature>
<feature type="short sequence motif" description="Involved in the stabilization of the negatively charged intermediate by the formation of the oxyanion hole" evidence="1">
    <location>
        <begin position="91"/>
        <end position="93"/>
    </location>
</feature>
<feature type="active site" evidence="2">
    <location>
        <position position="165"/>
    </location>
</feature>
<feature type="active site" evidence="2">
    <location>
        <position position="262"/>
    </location>
</feature>
<feature type="active site" evidence="2">
    <location>
        <position position="292"/>
    </location>
</feature>